<dbReference type="EC" id="3.1.1.4"/>
<dbReference type="EMBL" id="AF347072">
    <property type="protein sequence ID" value="AAL57187.1"/>
    <property type="molecule type" value="mRNA"/>
</dbReference>
<dbReference type="SMR" id="Q8WS88"/>
<dbReference type="GO" id="GO:0005576">
    <property type="term" value="C:extracellular region"/>
    <property type="evidence" value="ECO:0007669"/>
    <property type="project" value="UniProtKB-SubCell"/>
</dbReference>
<dbReference type="GO" id="GO:0042151">
    <property type="term" value="C:nematocyst"/>
    <property type="evidence" value="ECO:0007669"/>
    <property type="project" value="UniProtKB-SubCell"/>
</dbReference>
<dbReference type="GO" id="GO:0005509">
    <property type="term" value="F:calcium ion binding"/>
    <property type="evidence" value="ECO:0007669"/>
    <property type="project" value="InterPro"/>
</dbReference>
<dbReference type="GO" id="GO:0047498">
    <property type="term" value="F:calcium-dependent phospholipase A2 activity"/>
    <property type="evidence" value="ECO:0007669"/>
    <property type="project" value="TreeGrafter"/>
</dbReference>
<dbReference type="GO" id="GO:0005543">
    <property type="term" value="F:phospholipid binding"/>
    <property type="evidence" value="ECO:0007669"/>
    <property type="project" value="TreeGrafter"/>
</dbReference>
<dbReference type="GO" id="GO:0090729">
    <property type="term" value="F:toxin activity"/>
    <property type="evidence" value="ECO:0007669"/>
    <property type="project" value="UniProtKB-KW"/>
</dbReference>
<dbReference type="GO" id="GO:0050482">
    <property type="term" value="P:arachidonate secretion"/>
    <property type="evidence" value="ECO:0007669"/>
    <property type="project" value="InterPro"/>
</dbReference>
<dbReference type="GO" id="GO:0016042">
    <property type="term" value="P:lipid catabolic process"/>
    <property type="evidence" value="ECO:0007669"/>
    <property type="project" value="UniProtKB-KW"/>
</dbReference>
<dbReference type="GO" id="GO:0006644">
    <property type="term" value="P:phospholipid metabolic process"/>
    <property type="evidence" value="ECO:0007669"/>
    <property type="project" value="InterPro"/>
</dbReference>
<dbReference type="CDD" id="cd00125">
    <property type="entry name" value="PLA2c"/>
    <property type="match status" value="1"/>
</dbReference>
<dbReference type="Gene3D" id="1.20.90.10">
    <property type="entry name" value="Phospholipase A2 domain"/>
    <property type="match status" value="1"/>
</dbReference>
<dbReference type="InterPro" id="IPR001211">
    <property type="entry name" value="PLipase_A2"/>
</dbReference>
<dbReference type="InterPro" id="IPR033112">
    <property type="entry name" value="PLipase_A2_Asp_AS"/>
</dbReference>
<dbReference type="InterPro" id="IPR016090">
    <property type="entry name" value="PLipase_A2_dom"/>
</dbReference>
<dbReference type="InterPro" id="IPR036444">
    <property type="entry name" value="PLipase_A2_dom_sf"/>
</dbReference>
<dbReference type="InterPro" id="IPR033113">
    <property type="entry name" value="PLipase_A2_His_AS"/>
</dbReference>
<dbReference type="PANTHER" id="PTHR11716:SF51">
    <property type="entry name" value="PHOSPHOLIPASE A2"/>
    <property type="match status" value="1"/>
</dbReference>
<dbReference type="PANTHER" id="PTHR11716">
    <property type="entry name" value="PHOSPHOLIPASE A2 FAMILY MEMBER"/>
    <property type="match status" value="1"/>
</dbReference>
<dbReference type="Pfam" id="PF00068">
    <property type="entry name" value="Phospholip_A2_1"/>
    <property type="match status" value="1"/>
</dbReference>
<dbReference type="PRINTS" id="PR00389">
    <property type="entry name" value="PHPHLIPASEA2"/>
</dbReference>
<dbReference type="SMART" id="SM00085">
    <property type="entry name" value="PA2c"/>
    <property type="match status" value="1"/>
</dbReference>
<dbReference type="SUPFAM" id="SSF48619">
    <property type="entry name" value="Phospholipase A2, PLA2"/>
    <property type="match status" value="1"/>
</dbReference>
<dbReference type="PROSITE" id="PS00119">
    <property type="entry name" value="PA2_ASP"/>
    <property type="match status" value="1"/>
</dbReference>
<dbReference type="PROSITE" id="PS00118">
    <property type="entry name" value="PA2_HIS"/>
    <property type="match status" value="1"/>
</dbReference>
<feature type="signal peptide" evidence="2">
    <location>
        <begin position="1"/>
        <end position="19"/>
    </location>
</feature>
<feature type="propeptide" id="PRO_0000239808" evidence="7">
    <location>
        <begin position="20"/>
        <end position="35"/>
    </location>
</feature>
<feature type="chain" id="PRO_0000239809" description="Phospholipase A2 A2-hormotoxin-Apt1a">
    <location>
        <begin position="38"/>
        <end position="156"/>
    </location>
</feature>
<feature type="active site" evidence="1">
    <location>
        <position position="83"/>
    </location>
</feature>
<feature type="active site" evidence="1">
    <location>
        <position position="132"/>
    </location>
</feature>
<feature type="binding site" evidence="1">
    <location>
        <position position="65"/>
    </location>
    <ligand>
        <name>Ca(2+)</name>
        <dbReference type="ChEBI" id="CHEBI:29108"/>
    </ligand>
</feature>
<feature type="binding site" evidence="1">
    <location>
        <position position="67"/>
    </location>
    <ligand>
        <name>Ca(2+)</name>
        <dbReference type="ChEBI" id="CHEBI:29108"/>
    </ligand>
</feature>
<feature type="binding site" evidence="1">
    <location>
        <position position="84"/>
    </location>
    <ligand>
        <name>Ca(2+)</name>
        <dbReference type="ChEBI" id="CHEBI:29108"/>
    </ligand>
</feature>
<feature type="disulfide bond" evidence="1">
    <location>
        <begin position="62"/>
        <end position="156"/>
    </location>
</feature>
<feature type="disulfide bond" evidence="1">
    <location>
        <begin position="64"/>
        <end position="80"/>
    </location>
</feature>
<feature type="disulfide bond" evidence="1">
    <location>
        <begin position="79"/>
        <end position="138"/>
    </location>
</feature>
<feature type="disulfide bond" evidence="1">
    <location>
        <begin position="86"/>
        <end position="131"/>
    </location>
</feature>
<feature type="disulfide bond" evidence="1">
    <location>
        <begin position="115"/>
        <end position="129"/>
    </location>
</feature>
<accession>Q8WS88</accession>
<organism>
    <name type="scientific">Adamsia palliata</name>
    <name type="common">Cloak anemone</name>
    <name type="synonym">Adamsia carciniopados</name>
    <dbReference type="NCBI Taxonomy" id="176095"/>
    <lineage>
        <taxon>Eukaryota</taxon>
        <taxon>Metazoa</taxon>
        <taxon>Cnidaria</taxon>
        <taxon>Anthozoa</taxon>
        <taxon>Hexacorallia</taxon>
        <taxon>Actiniaria</taxon>
        <taxon>Nynantheae</taxon>
        <taxon>Hormathiidae</taxon>
        <taxon>Adamsia</taxon>
    </lineage>
</organism>
<protein>
    <recommendedName>
        <fullName evidence="6">Phospholipase A2 A2-hormotoxin-Apt1a</fullName>
        <shortName evidence="6">A2-HRTX-Apt1a</shortName>
    </recommendedName>
    <alternativeName>
        <fullName evidence="5">AcPLA2</fullName>
        <ecNumber>3.1.1.4</ecNumber>
    </alternativeName>
    <alternativeName>
        <fullName>Acarc</fullName>
    </alternativeName>
    <alternativeName>
        <fullName>Phosphatidylcholine 2-acylhydrolase</fullName>
    </alternativeName>
</protein>
<proteinExistence type="evidence at transcript level"/>
<name>PA2_ADAPA</name>
<keyword id="KW-0106">Calcium</keyword>
<keyword id="KW-0165">Cleavage on pair of basic residues</keyword>
<keyword id="KW-1015">Disulfide bond</keyword>
<keyword id="KW-0378">Hydrolase</keyword>
<keyword id="KW-0442">Lipid degradation</keyword>
<keyword id="KW-0443">Lipid metabolism</keyword>
<keyword id="KW-0479">Metal-binding</keyword>
<keyword id="KW-0166">Nematocyst</keyword>
<keyword id="KW-0964">Secreted</keyword>
<keyword id="KW-0732">Signal</keyword>
<keyword id="KW-0800">Toxin</keyword>
<reference key="1">
    <citation type="journal article" date="2002" name="Comp. Biochem. Physiol.">
        <title>Cloning of a novel phospholipase A2 from the cnidarian Adamsia carciniopados.</title>
        <authorList>
            <person name="Talvinen K.A."/>
            <person name="Nevalainen T.J."/>
        </authorList>
    </citation>
    <scope>NUCLEOTIDE SEQUENCE [MRNA]</scope>
</reference>
<reference key="2">
    <citation type="journal article" date="2012" name="Toxicon">
        <title>Development of a rational nomenclature for naming peptide and protein toxins from sea anemones.</title>
        <authorList>
            <person name="Oliveira J.S."/>
            <person name="Fuentes-Silva D."/>
            <person name="King G.F."/>
        </authorList>
    </citation>
    <scope>NOMENCLATURE</scope>
</reference>
<evidence type="ECO:0000250" key="1"/>
<evidence type="ECO:0000255" key="2"/>
<evidence type="ECO:0000255" key="3">
    <source>
        <dbReference type="PROSITE-ProRule" id="PRU10035"/>
    </source>
</evidence>
<evidence type="ECO:0000255" key="4">
    <source>
        <dbReference type="PROSITE-ProRule" id="PRU10036"/>
    </source>
</evidence>
<evidence type="ECO:0000303" key="5">
    <source>
    </source>
</evidence>
<evidence type="ECO:0000303" key="6">
    <source>
    </source>
</evidence>
<evidence type="ECO:0000305" key="7"/>
<comment type="function">
    <text evidence="5">Sea anemone phospholipase A2 (PLA2) that may have a role both in defense and in digestion, since its expression and enzymatic activity were found both in the acontia (defensive organs) and tentacles. PLA2 catalyzes the calcium-dependent hydrolysis of the 2-acyl groups in 3-sn-phosphoglycerides.</text>
</comment>
<comment type="catalytic activity">
    <reaction evidence="3 4">
        <text>a 1,2-diacyl-sn-glycero-3-phosphocholine + H2O = a 1-acyl-sn-glycero-3-phosphocholine + a fatty acid + H(+)</text>
        <dbReference type="Rhea" id="RHEA:15801"/>
        <dbReference type="ChEBI" id="CHEBI:15377"/>
        <dbReference type="ChEBI" id="CHEBI:15378"/>
        <dbReference type="ChEBI" id="CHEBI:28868"/>
        <dbReference type="ChEBI" id="CHEBI:57643"/>
        <dbReference type="ChEBI" id="CHEBI:58168"/>
        <dbReference type="EC" id="3.1.1.4"/>
    </reaction>
</comment>
<comment type="cofactor">
    <cofactor evidence="1">
        <name>Ca(2+)</name>
        <dbReference type="ChEBI" id="CHEBI:29108"/>
    </cofactor>
    <text evidence="1">Binds 1 Ca(2+) ion per subunit.</text>
</comment>
<comment type="subcellular location">
    <subcellularLocation>
        <location evidence="7">Secreted</location>
    </subcellularLocation>
    <subcellularLocation>
        <location evidence="7">Nematocyst</location>
    </subcellularLocation>
</comment>
<comment type="similarity">
    <text evidence="7">Belongs to the phospholipase A2 family.</text>
</comment>
<sequence>MQLYTYFFTFSLVLILALADQENKSLDFTQEGGIAKRGAFQFSYLIKKYTGRNPLDYWGYGCWCGLGGKGTPVDGVDWCCYHHDMCFNSITQGPRPTCSKNAPYHKNYYFSGLKCSTGWLTSKCGRAICACDIAAVKCFMRNHFNNKYQNYKKNIC</sequence>